<name>PCKA_SHEON</name>
<feature type="chain" id="PRO_0000203842" description="Phosphoenolpyruvate carboxykinase (ATP)">
    <location>
        <begin position="1"/>
        <end position="513"/>
    </location>
</feature>
<feature type="binding site" evidence="1">
    <location>
        <position position="45"/>
    </location>
    <ligand>
        <name>substrate</name>
    </ligand>
</feature>
<feature type="binding site" evidence="1">
    <location>
        <position position="179"/>
    </location>
    <ligand>
        <name>substrate</name>
    </ligand>
</feature>
<feature type="binding site" evidence="1">
    <location>
        <position position="185"/>
    </location>
    <ligand>
        <name>ATP</name>
        <dbReference type="ChEBI" id="CHEBI:30616"/>
    </ligand>
</feature>
<feature type="binding site" evidence="1">
    <location>
        <position position="185"/>
    </location>
    <ligand>
        <name>Mn(2+)</name>
        <dbReference type="ChEBI" id="CHEBI:29035"/>
    </ligand>
</feature>
<feature type="binding site" evidence="1">
    <location>
        <position position="185"/>
    </location>
    <ligand>
        <name>substrate</name>
    </ligand>
</feature>
<feature type="binding site" evidence="1">
    <location>
        <position position="204"/>
    </location>
    <ligand>
        <name>ATP</name>
        <dbReference type="ChEBI" id="CHEBI:30616"/>
    </ligand>
</feature>
<feature type="binding site" evidence="1">
    <location>
        <position position="204"/>
    </location>
    <ligand>
        <name>Mn(2+)</name>
        <dbReference type="ChEBI" id="CHEBI:29035"/>
    </ligand>
</feature>
<feature type="binding site" evidence="1">
    <location>
        <begin position="220"/>
        <end position="228"/>
    </location>
    <ligand>
        <name>ATP</name>
        <dbReference type="ChEBI" id="CHEBI:30616"/>
    </ligand>
</feature>
<feature type="binding site" evidence="1">
    <location>
        <position position="241"/>
    </location>
    <ligand>
        <name>Mn(2+)</name>
        <dbReference type="ChEBI" id="CHEBI:29035"/>
    </ligand>
</feature>
<feature type="binding site" evidence="1">
    <location>
        <position position="269"/>
    </location>
    <ligand>
        <name>ATP</name>
        <dbReference type="ChEBI" id="CHEBI:30616"/>
    </ligand>
</feature>
<feature type="binding site" evidence="1">
    <location>
        <position position="305"/>
    </location>
    <ligand>
        <name>ATP</name>
        <dbReference type="ChEBI" id="CHEBI:30616"/>
    </ligand>
</feature>
<feature type="binding site" evidence="1">
    <location>
        <position position="305"/>
    </location>
    <ligand>
        <name>substrate</name>
    </ligand>
</feature>
<feature type="binding site" evidence="1">
    <location>
        <position position="431"/>
    </location>
    <ligand>
        <name>ATP</name>
        <dbReference type="ChEBI" id="CHEBI:30616"/>
    </ligand>
</feature>
<organism>
    <name type="scientific">Shewanella oneidensis (strain ATCC 700550 / JCM 31522 / CIP 106686 / LMG 19005 / NCIMB 14063 / MR-1)</name>
    <dbReference type="NCBI Taxonomy" id="211586"/>
    <lineage>
        <taxon>Bacteria</taxon>
        <taxon>Pseudomonadati</taxon>
        <taxon>Pseudomonadota</taxon>
        <taxon>Gammaproteobacteria</taxon>
        <taxon>Alteromonadales</taxon>
        <taxon>Shewanellaceae</taxon>
        <taxon>Shewanella</taxon>
    </lineage>
</organism>
<proteinExistence type="inferred from homology"/>
<comment type="function">
    <text evidence="1">Involved in the gluconeogenesis. Catalyzes the conversion of oxaloacetate (OAA) to phosphoenolpyruvate (PEP) through direct phosphoryl transfer between the nucleoside triphosphate and OAA.</text>
</comment>
<comment type="catalytic activity">
    <reaction evidence="1">
        <text>oxaloacetate + ATP = phosphoenolpyruvate + ADP + CO2</text>
        <dbReference type="Rhea" id="RHEA:18617"/>
        <dbReference type="ChEBI" id="CHEBI:16452"/>
        <dbReference type="ChEBI" id="CHEBI:16526"/>
        <dbReference type="ChEBI" id="CHEBI:30616"/>
        <dbReference type="ChEBI" id="CHEBI:58702"/>
        <dbReference type="ChEBI" id="CHEBI:456216"/>
        <dbReference type="EC" id="4.1.1.49"/>
    </reaction>
</comment>
<comment type="cofactor">
    <cofactor evidence="1">
        <name>Mn(2+)</name>
        <dbReference type="ChEBI" id="CHEBI:29035"/>
    </cofactor>
    <text evidence="1">Binds 1 Mn(2+) ion per subunit.</text>
</comment>
<comment type="pathway">
    <text evidence="1">Carbohydrate biosynthesis; gluconeogenesis.</text>
</comment>
<comment type="subunit">
    <text evidence="1">Monomer.</text>
</comment>
<comment type="subcellular location">
    <subcellularLocation>
        <location evidence="1">Cytoplasm</location>
    </subcellularLocation>
</comment>
<comment type="similarity">
    <text evidence="1">Belongs to the phosphoenolpyruvate carboxykinase (ATP) family.</text>
</comment>
<evidence type="ECO:0000255" key="1">
    <source>
        <dbReference type="HAMAP-Rule" id="MF_00453"/>
    </source>
</evidence>
<dbReference type="EC" id="4.1.1.49" evidence="1"/>
<dbReference type="EMBL" id="AE014299">
    <property type="protein sequence ID" value="AAN53249.1"/>
    <property type="molecule type" value="Genomic_DNA"/>
</dbReference>
<dbReference type="RefSeq" id="NP_715804.1">
    <property type="nucleotide sequence ID" value="NC_004347.2"/>
</dbReference>
<dbReference type="RefSeq" id="WP_011070559.1">
    <property type="nucleotide sequence ID" value="NC_004347.2"/>
</dbReference>
<dbReference type="SMR" id="Q8EKD3"/>
<dbReference type="STRING" id="211586.SO_0162"/>
<dbReference type="PaxDb" id="211586-SO_0162"/>
<dbReference type="KEGG" id="son:SO_0162"/>
<dbReference type="PATRIC" id="fig|211586.12.peg.151"/>
<dbReference type="eggNOG" id="COG1866">
    <property type="taxonomic scope" value="Bacteria"/>
</dbReference>
<dbReference type="HOGENOM" id="CLU_018247_0_1_6"/>
<dbReference type="OrthoDB" id="9806325at2"/>
<dbReference type="PhylomeDB" id="Q8EKD3"/>
<dbReference type="BioCyc" id="SONE211586:G1GMP-149-MONOMER"/>
<dbReference type="UniPathway" id="UPA00138"/>
<dbReference type="Proteomes" id="UP000008186">
    <property type="component" value="Chromosome"/>
</dbReference>
<dbReference type="GO" id="GO:0005829">
    <property type="term" value="C:cytosol"/>
    <property type="evidence" value="ECO:0000318"/>
    <property type="project" value="GO_Central"/>
</dbReference>
<dbReference type="GO" id="GO:0005524">
    <property type="term" value="F:ATP binding"/>
    <property type="evidence" value="ECO:0007669"/>
    <property type="project" value="UniProtKB-UniRule"/>
</dbReference>
<dbReference type="GO" id="GO:0046872">
    <property type="term" value="F:metal ion binding"/>
    <property type="evidence" value="ECO:0007669"/>
    <property type="project" value="UniProtKB-KW"/>
</dbReference>
<dbReference type="GO" id="GO:0004612">
    <property type="term" value="F:phosphoenolpyruvate carboxykinase (ATP) activity"/>
    <property type="evidence" value="ECO:0000318"/>
    <property type="project" value="GO_Central"/>
</dbReference>
<dbReference type="GO" id="GO:0006094">
    <property type="term" value="P:gluconeogenesis"/>
    <property type="evidence" value="ECO:0000318"/>
    <property type="project" value="GO_Central"/>
</dbReference>
<dbReference type="CDD" id="cd00484">
    <property type="entry name" value="PEPCK_ATP"/>
    <property type="match status" value="1"/>
</dbReference>
<dbReference type="FunFam" id="2.170.8.10:FF:000001">
    <property type="entry name" value="Phosphoenolpyruvate carboxykinase (ATP)"/>
    <property type="match status" value="1"/>
</dbReference>
<dbReference type="Gene3D" id="3.90.228.20">
    <property type="match status" value="1"/>
</dbReference>
<dbReference type="Gene3D" id="3.40.449.10">
    <property type="entry name" value="Phosphoenolpyruvate Carboxykinase, domain 1"/>
    <property type="match status" value="1"/>
</dbReference>
<dbReference type="Gene3D" id="2.170.8.10">
    <property type="entry name" value="Phosphoenolpyruvate Carboxykinase, domain 2"/>
    <property type="match status" value="1"/>
</dbReference>
<dbReference type="HAMAP" id="MF_00453">
    <property type="entry name" value="PEPCK_ATP"/>
    <property type="match status" value="1"/>
</dbReference>
<dbReference type="InterPro" id="IPR001272">
    <property type="entry name" value="PEP_carboxykinase_ATP"/>
</dbReference>
<dbReference type="InterPro" id="IPR013035">
    <property type="entry name" value="PEP_carboxykinase_C"/>
</dbReference>
<dbReference type="InterPro" id="IPR008210">
    <property type="entry name" value="PEP_carboxykinase_N"/>
</dbReference>
<dbReference type="InterPro" id="IPR015994">
    <property type="entry name" value="PEPCK_ATP_CS"/>
</dbReference>
<dbReference type="NCBIfam" id="TIGR00224">
    <property type="entry name" value="pckA"/>
    <property type="match status" value="1"/>
</dbReference>
<dbReference type="NCBIfam" id="NF006820">
    <property type="entry name" value="PRK09344.1-2"/>
    <property type="match status" value="1"/>
</dbReference>
<dbReference type="NCBIfam" id="NF006821">
    <property type="entry name" value="PRK09344.1-3"/>
    <property type="match status" value="1"/>
</dbReference>
<dbReference type="NCBIfam" id="NF006823">
    <property type="entry name" value="PRK09344.1-5"/>
    <property type="match status" value="1"/>
</dbReference>
<dbReference type="PANTHER" id="PTHR30031:SF0">
    <property type="entry name" value="PHOSPHOENOLPYRUVATE CARBOXYKINASE (ATP)"/>
    <property type="match status" value="1"/>
</dbReference>
<dbReference type="PANTHER" id="PTHR30031">
    <property type="entry name" value="PHOSPHOENOLPYRUVATE CARBOXYKINASE ATP"/>
    <property type="match status" value="1"/>
</dbReference>
<dbReference type="Pfam" id="PF01293">
    <property type="entry name" value="PEPCK_ATP"/>
    <property type="match status" value="1"/>
</dbReference>
<dbReference type="PIRSF" id="PIRSF006294">
    <property type="entry name" value="PEP_crbxkin"/>
    <property type="match status" value="1"/>
</dbReference>
<dbReference type="SUPFAM" id="SSF68923">
    <property type="entry name" value="PEP carboxykinase N-terminal domain"/>
    <property type="match status" value="1"/>
</dbReference>
<dbReference type="SUPFAM" id="SSF53795">
    <property type="entry name" value="PEP carboxykinase-like"/>
    <property type="match status" value="1"/>
</dbReference>
<dbReference type="PROSITE" id="PS00532">
    <property type="entry name" value="PEPCK_ATP"/>
    <property type="match status" value="1"/>
</dbReference>
<accession>Q8EKD3</accession>
<protein>
    <recommendedName>
        <fullName evidence="1">Phosphoenolpyruvate carboxykinase (ATP)</fullName>
        <shortName evidence="1">PCK</shortName>
        <shortName evidence="1">PEP carboxykinase</shortName>
        <shortName evidence="1">PEPCK</shortName>
        <ecNumber evidence="1">4.1.1.49</ecNumber>
    </recommendedName>
</protein>
<sequence>MADGLNRVHYNPSTAQLVEFALLRGEGELTANGALVAKTGTRTGRSPGDRFIVKEPGSAADIEWGPVNQAFEPGAFEGLWARVEAFLADKELFVSDLEVGADPEHYQPVRVTTQYAWHQLFARNLFIIPEEFNRQNKPVWQIINAPDFVCMPERDGTNSDAAVILNFAERKVLLAGLKYAGEMKKSMFSVQNFLLPAQGVLPMHCSANVGKDGDTTLFFGLSGTGKTTLSADPKRFLIGDDEHGWAPGGVFNIEGGCYAKCIDLSQKNEPVIWDAIRFGTVLENVVMDEHRVPNYKDSSLTENTRAAYPLEHIAQRKEDNRGAEPHAVVFLTCDVSGVLPPVSILSKEQAAYHFLSGYTAKVGSTEIGSTSAIQSTFSTCFGAPFFPRPAGVYAELLMKRIESFGSQVYLVNTGWTGGPHGIGKRFDIPTTRAIIDAIVSGELKNVETVHLDTLNLAVPVAVSGVDSNLLNPVNTWSDKALYAEYAQKLAAAFTKNFAKYQVSDAIRNAGPKA</sequence>
<keyword id="KW-0067">ATP-binding</keyword>
<keyword id="KW-0963">Cytoplasm</keyword>
<keyword id="KW-0210">Decarboxylase</keyword>
<keyword id="KW-0312">Gluconeogenesis</keyword>
<keyword id="KW-0456">Lyase</keyword>
<keyword id="KW-0464">Manganese</keyword>
<keyword id="KW-0479">Metal-binding</keyword>
<keyword id="KW-0547">Nucleotide-binding</keyword>
<keyword id="KW-1185">Reference proteome</keyword>
<reference key="1">
    <citation type="journal article" date="2002" name="Nat. Biotechnol.">
        <title>Genome sequence of the dissimilatory metal ion-reducing bacterium Shewanella oneidensis.</title>
        <authorList>
            <person name="Heidelberg J.F."/>
            <person name="Paulsen I.T."/>
            <person name="Nelson K.E."/>
            <person name="Gaidos E.J."/>
            <person name="Nelson W.C."/>
            <person name="Read T.D."/>
            <person name="Eisen J.A."/>
            <person name="Seshadri R."/>
            <person name="Ward N.L."/>
            <person name="Methe B.A."/>
            <person name="Clayton R.A."/>
            <person name="Meyer T."/>
            <person name="Tsapin A."/>
            <person name="Scott J."/>
            <person name="Beanan M.J."/>
            <person name="Brinkac L.M."/>
            <person name="Daugherty S.C."/>
            <person name="DeBoy R.T."/>
            <person name="Dodson R.J."/>
            <person name="Durkin A.S."/>
            <person name="Haft D.H."/>
            <person name="Kolonay J.F."/>
            <person name="Madupu R."/>
            <person name="Peterson J.D."/>
            <person name="Umayam L.A."/>
            <person name="White O."/>
            <person name="Wolf A.M."/>
            <person name="Vamathevan J.J."/>
            <person name="Weidman J.F."/>
            <person name="Impraim M."/>
            <person name="Lee K."/>
            <person name="Berry K.J."/>
            <person name="Lee C."/>
            <person name="Mueller J."/>
            <person name="Khouri H.M."/>
            <person name="Gill J."/>
            <person name="Utterback T.R."/>
            <person name="McDonald L.A."/>
            <person name="Feldblyum T.V."/>
            <person name="Smith H.O."/>
            <person name="Venter J.C."/>
            <person name="Nealson K.H."/>
            <person name="Fraser C.M."/>
        </authorList>
    </citation>
    <scope>NUCLEOTIDE SEQUENCE [LARGE SCALE GENOMIC DNA]</scope>
    <source>
        <strain>ATCC 700550 / JCM 31522 / CIP 106686 / LMG 19005 / NCIMB 14063 / MR-1</strain>
    </source>
</reference>
<gene>
    <name evidence="1" type="primary">pckA</name>
    <name type="ordered locus">SO_0162</name>
</gene>